<accession>O13022</accession>
<accession>Q7ZWQ8</accession>
<proteinExistence type="evidence at transcript level"/>
<feature type="chain" id="PRO_0000165920" description="Dihydropyrimidinase-related protein 3-A">
    <location>
        <begin position="1"/>
        <end position="571"/>
    </location>
</feature>
<feature type="region of interest" description="Disordered" evidence="2">
    <location>
        <begin position="509"/>
        <end position="571"/>
    </location>
</feature>
<feature type="compositionally biased region" description="Polar residues" evidence="2">
    <location>
        <begin position="516"/>
        <end position="529"/>
    </location>
</feature>
<feature type="sequence conflict" description="In Ref. 1; CAA73509." evidence="3" ref="1">
    <original>T</original>
    <variation>I</variation>
    <location>
        <position position="241"/>
    </location>
</feature>
<feature type="sequence conflict" description="In Ref. 1; CAA73509." evidence="3" ref="1">
    <original>H</original>
    <variation>P</variation>
    <location>
        <position position="470"/>
    </location>
</feature>
<reference key="1">
    <citation type="submission" date="1997-05" db="EMBL/GenBank/DDBJ databases">
        <authorList>
            <person name="Engel E.R."/>
            <person name="Lepperdinger G."/>
            <person name="Richter K."/>
        </authorList>
    </citation>
    <scope>NUCLEOTIDE SEQUENCE [MRNA]</scope>
    <source>
        <tissue>Brain</tissue>
    </source>
</reference>
<reference key="2">
    <citation type="submission" date="2003-02" db="EMBL/GenBank/DDBJ databases">
        <authorList>
            <consortium name="NIH - Xenopus Gene Collection (XGC) project"/>
        </authorList>
    </citation>
    <scope>NUCLEOTIDE SEQUENCE [LARGE SCALE MRNA]</scope>
    <source>
        <tissue>Tail bud</tissue>
    </source>
</reference>
<sequence length="571" mass="62129">MSYQGKKNIPRITSERLLIKGGRIVNDDQSFYADIYMEDGLIKQIGDNLIVPGGVKTIEANGKMVIPGGIDVHTHLQMPYRGMTTVDDFLQGTKAALAGGTTMIVDHVIPEPEASLTEAFEKWREWADGKTCCDYSLHVDITHWSDSVKQEVETLVKQKGVNSFMVYMAYKDLYQMSNTELYEIFTFLGSLGAIAQVHAENGDIIAQEQNRMLELGITGPEGHVLSRPEELEAEAVFRAITIASQTNCPLYVTKVMSKSSVDLISQARKKGYVVFGEPITASLGTDGTHYWSKNWAKAAAFVTSPPLSPDPTTPDYINSLLASGDLQVTGSAHATFSTAQKAIGKDNFTLIPEGTNGIEERMSVIWDKSVATGKMDENQFVSVTSTNAAKIFNLYPRKGRIAVGSDSDLVIWDPDAVKIVSAKSHHSAAEYNIFEGMELRGAPLVVICQGKIMMEDGTLHVTQGTGRFIHCSPFPDYVYKRIKARTKMAELHGVPRGMYDGPVYDLASTPKAGTPAGSTKGSPTKQTPPVRNLHHSAFSLAGNQGDESGVRSASRRIVAPPGGRSNITSLS</sequence>
<dbReference type="EMBL" id="Y13069">
    <property type="protein sequence ID" value="CAA73509.1"/>
    <property type="status" value="ALT_FRAME"/>
    <property type="molecule type" value="mRNA"/>
</dbReference>
<dbReference type="EMBL" id="BC046836">
    <property type="protein sequence ID" value="AAH46836.1"/>
    <property type="molecule type" value="mRNA"/>
</dbReference>
<dbReference type="RefSeq" id="NP_001080111.1">
    <property type="nucleotide sequence ID" value="NM_001086642.1"/>
</dbReference>
<dbReference type="SMR" id="O13022"/>
<dbReference type="MEROPS" id="M38.976"/>
<dbReference type="DNASU" id="379803"/>
<dbReference type="GeneID" id="379803"/>
<dbReference type="KEGG" id="xla:379803"/>
<dbReference type="AGR" id="Xenbase:XB-GENE-944735"/>
<dbReference type="CTD" id="379803"/>
<dbReference type="Xenbase" id="XB-GENE-944735">
    <property type="gene designation" value="dpysl3.S"/>
</dbReference>
<dbReference type="OrthoDB" id="10258955at2759"/>
<dbReference type="Proteomes" id="UP000186698">
    <property type="component" value="Chromosome 3S"/>
</dbReference>
<dbReference type="Bgee" id="379803">
    <property type="expression patterns" value="Expressed in brain and 17 other cell types or tissues"/>
</dbReference>
<dbReference type="GO" id="GO:0005829">
    <property type="term" value="C:cytosol"/>
    <property type="evidence" value="ECO:0000318"/>
    <property type="project" value="GO_Central"/>
</dbReference>
<dbReference type="GO" id="GO:0030426">
    <property type="term" value="C:growth cone"/>
    <property type="evidence" value="ECO:0007669"/>
    <property type="project" value="UniProtKB-SubCell"/>
</dbReference>
<dbReference type="GO" id="GO:0016812">
    <property type="term" value="F:hydrolase activity, acting on carbon-nitrogen (but not peptide) bonds, in cyclic amides"/>
    <property type="evidence" value="ECO:0000318"/>
    <property type="project" value="GO_Central"/>
</dbReference>
<dbReference type="GO" id="GO:0051764">
    <property type="term" value="P:actin crosslink formation"/>
    <property type="evidence" value="ECO:0000318"/>
    <property type="project" value="GO_Central"/>
</dbReference>
<dbReference type="CDD" id="cd01314">
    <property type="entry name" value="D-HYD"/>
    <property type="match status" value="1"/>
</dbReference>
<dbReference type="FunFam" id="2.30.40.10:FF:000021">
    <property type="entry name" value="Dihydropyrimidinase-related protein 2"/>
    <property type="match status" value="1"/>
</dbReference>
<dbReference type="FunFam" id="3.20.20.140:FF:000174">
    <property type="entry name" value="Dihydropyrimidinase-related protein 2"/>
    <property type="match status" value="1"/>
</dbReference>
<dbReference type="Gene3D" id="3.20.20.140">
    <property type="entry name" value="Metal-dependent hydrolases"/>
    <property type="match status" value="1"/>
</dbReference>
<dbReference type="Gene3D" id="2.30.40.10">
    <property type="entry name" value="Urease, subunit C, domain 1"/>
    <property type="match status" value="1"/>
</dbReference>
<dbReference type="InterPro" id="IPR006680">
    <property type="entry name" value="Amidohydro-rel"/>
</dbReference>
<dbReference type="InterPro" id="IPR011778">
    <property type="entry name" value="Hydantoinase/dihydroPyrase"/>
</dbReference>
<dbReference type="InterPro" id="IPR011059">
    <property type="entry name" value="Metal-dep_hydrolase_composite"/>
</dbReference>
<dbReference type="InterPro" id="IPR032466">
    <property type="entry name" value="Metal_Hydrolase"/>
</dbReference>
<dbReference type="InterPro" id="IPR050378">
    <property type="entry name" value="Metallo-dep_Hydrolases_sf"/>
</dbReference>
<dbReference type="NCBIfam" id="TIGR02033">
    <property type="entry name" value="D-hydantoinase"/>
    <property type="match status" value="1"/>
</dbReference>
<dbReference type="PANTHER" id="PTHR11647:SF57">
    <property type="entry name" value="DIHYDROPYRIMIDINASE-RELATED PROTEIN 3"/>
    <property type="match status" value="1"/>
</dbReference>
<dbReference type="PANTHER" id="PTHR11647">
    <property type="entry name" value="HYDRANTOINASE/DIHYDROPYRIMIDINASE FAMILY MEMBER"/>
    <property type="match status" value="1"/>
</dbReference>
<dbReference type="Pfam" id="PF01979">
    <property type="entry name" value="Amidohydro_1"/>
    <property type="match status" value="1"/>
</dbReference>
<dbReference type="SUPFAM" id="SSF51338">
    <property type="entry name" value="Composite domain of metallo-dependent hydrolases"/>
    <property type="match status" value="2"/>
</dbReference>
<dbReference type="SUPFAM" id="SSF51556">
    <property type="entry name" value="Metallo-dependent hydrolases"/>
    <property type="match status" value="1"/>
</dbReference>
<name>DPY3A_XENLA</name>
<evidence type="ECO:0000250" key="1"/>
<evidence type="ECO:0000256" key="2">
    <source>
        <dbReference type="SAM" id="MobiDB-lite"/>
    </source>
</evidence>
<evidence type="ECO:0000305" key="3"/>
<organism>
    <name type="scientific">Xenopus laevis</name>
    <name type="common">African clawed frog</name>
    <dbReference type="NCBI Taxonomy" id="8355"/>
    <lineage>
        <taxon>Eukaryota</taxon>
        <taxon>Metazoa</taxon>
        <taxon>Chordata</taxon>
        <taxon>Craniata</taxon>
        <taxon>Vertebrata</taxon>
        <taxon>Euteleostomi</taxon>
        <taxon>Amphibia</taxon>
        <taxon>Batrachia</taxon>
        <taxon>Anura</taxon>
        <taxon>Pipoidea</taxon>
        <taxon>Pipidae</taxon>
        <taxon>Xenopodinae</taxon>
        <taxon>Xenopus</taxon>
        <taxon>Xenopus</taxon>
    </lineage>
</organism>
<keyword id="KW-0966">Cell projection</keyword>
<keyword id="KW-0963">Cytoplasm</keyword>
<keyword id="KW-1185">Reference proteome</keyword>
<gene>
    <name type="primary">dpysl3-a</name>
    <name type="synonym">dpysl3</name>
    <name type="synonym">nsp1</name>
</gene>
<comment type="function">
    <text evidence="1">Necessary for signaling by class 3 semaphorins and subsequent remodeling of the cytoskeleton. Plays a role in axon guidance, neuronal growth cone collapse and cell migration (By similarity).</text>
</comment>
<comment type="subunit">
    <text evidence="1">Homotetramer and heterotetramer.</text>
</comment>
<comment type="subcellular location">
    <subcellularLocation>
        <location evidence="1">Cytoplasm</location>
    </subcellularLocation>
    <subcellularLocation>
        <location evidence="1">Cell projection</location>
        <location evidence="1">Growth cone</location>
    </subcellularLocation>
</comment>
<comment type="similarity">
    <text evidence="3">Belongs to the metallo-dependent hydrolases superfamily. Hydantoinase/dihydropyrimidinase family.</text>
</comment>
<comment type="caution">
    <text evidence="3">Lacks most of the conserved residues that are essential for binding the metal cofactor and hence for dihydropyrimidinase activity. Its enzyme activity is therefore unsure.</text>
</comment>
<comment type="sequence caution" evidence="3">
    <conflict type="frameshift">
        <sequence resource="EMBL-CDS" id="CAA73509"/>
    </conflict>
</comment>
<protein>
    <recommendedName>
        <fullName>Dihydropyrimidinase-related protein 3-A</fullName>
        <shortName>DRP-3-A</shortName>
    </recommendedName>
    <alternativeName>
        <fullName>Neural-specific protein 1</fullName>
    </alternativeName>
</protein>